<proteinExistence type="evidence at protein level"/>
<comment type="function">
    <text evidence="1">May be involved in transcriptional regulation.</text>
</comment>
<comment type="subcellular location">
    <subcellularLocation>
        <location evidence="4">Nucleus</location>
    </subcellularLocation>
</comment>
<comment type="similarity">
    <text evidence="4">Belongs to the krueppel C2H2-type zinc-finger protein family.</text>
</comment>
<comment type="sequence caution" evidence="4">
    <conflict type="erroneous initiation">
        <sequence resource="EMBL-CDS" id="BAB47500"/>
    </conflict>
</comment>
<dbReference type="EMBL" id="AB058774">
    <property type="protein sequence ID" value="BAB47500.2"/>
    <property type="status" value="ALT_INIT"/>
    <property type="molecule type" value="mRNA"/>
</dbReference>
<dbReference type="EMBL" id="AY500358">
    <property type="protein sequence ID" value="AAS55108.1"/>
    <property type="molecule type" value="mRNA"/>
</dbReference>
<dbReference type="CCDS" id="CCDS42241.1"/>
<dbReference type="RefSeq" id="NP_115919.1">
    <property type="nucleotide sequence ID" value="NM_032530.2"/>
</dbReference>
<dbReference type="RefSeq" id="XP_005256884.1">
    <property type="nucleotide sequence ID" value="XM_005256827.4"/>
</dbReference>
<dbReference type="RefSeq" id="XP_054173537.1">
    <property type="nucleotide sequence ID" value="XM_054317562.1"/>
</dbReference>
<dbReference type="SMR" id="Q96JF6"/>
<dbReference type="BioGRID" id="124152">
    <property type="interactions" value="6"/>
</dbReference>
<dbReference type="FunCoup" id="Q96JF6">
    <property type="interactions" value="49"/>
</dbReference>
<dbReference type="IntAct" id="Q96JF6">
    <property type="interactions" value="6"/>
</dbReference>
<dbReference type="STRING" id="9606.ENSP00000461032"/>
<dbReference type="GlyGen" id="Q96JF6">
    <property type="glycosylation" value="1 site, 1 O-linked glycan (1 site)"/>
</dbReference>
<dbReference type="iPTMnet" id="Q96JF6"/>
<dbReference type="PhosphoSitePlus" id="Q96JF6"/>
<dbReference type="BioMuta" id="ZNF594"/>
<dbReference type="DMDM" id="158706519"/>
<dbReference type="jPOST" id="Q96JF6"/>
<dbReference type="MassIVE" id="Q96JF6"/>
<dbReference type="PaxDb" id="9606-ENSP00000382513"/>
<dbReference type="PeptideAtlas" id="Q96JF6"/>
<dbReference type="ProteomicsDB" id="76955"/>
<dbReference type="Pumba" id="Q96JF6"/>
<dbReference type="Antibodypedia" id="77544">
    <property type="antibodies" value="16 antibodies from 5 providers"/>
</dbReference>
<dbReference type="DNASU" id="84622"/>
<dbReference type="Ensembl" id="ENST00000399604.4">
    <property type="protein sequence ID" value="ENSP00000382513.4"/>
    <property type="gene ID" value="ENSG00000180626.10"/>
</dbReference>
<dbReference type="Ensembl" id="ENST00000575779.2">
    <property type="protein sequence ID" value="ENSP00000461032.1"/>
    <property type="gene ID" value="ENSG00000180626.10"/>
</dbReference>
<dbReference type="GeneID" id="84622"/>
<dbReference type="KEGG" id="hsa:84622"/>
<dbReference type="MANE-Select" id="ENST00000575779.2">
    <property type="protein sequence ID" value="ENSP00000461032.1"/>
    <property type="RefSeq nucleotide sequence ID" value="NM_032530.2"/>
    <property type="RefSeq protein sequence ID" value="NP_115919.1"/>
</dbReference>
<dbReference type="UCSC" id="uc010cla.2">
    <property type="organism name" value="human"/>
</dbReference>
<dbReference type="AGR" id="HGNC:29392"/>
<dbReference type="CTD" id="84622"/>
<dbReference type="GeneCards" id="ZNF594"/>
<dbReference type="HGNC" id="HGNC:29392">
    <property type="gene designation" value="ZNF594"/>
</dbReference>
<dbReference type="HPA" id="ENSG00000180626">
    <property type="expression patterns" value="Low tissue specificity"/>
</dbReference>
<dbReference type="neXtProt" id="NX_Q96JF6"/>
<dbReference type="OpenTargets" id="ENSG00000180626"/>
<dbReference type="PharmGKB" id="PA134985995"/>
<dbReference type="VEuPathDB" id="HostDB:ENSG00000180626"/>
<dbReference type="eggNOG" id="KOG1721">
    <property type="taxonomic scope" value="Eukaryota"/>
</dbReference>
<dbReference type="GeneTree" id="ENSGT00940000161335"/>
<dbReference type="HOGENOM" id="CLU_002678_17_1_1"/>
<dbReference type="InParanoid" id="Q96JF6"/>
<dbReference type="OMA" id="WCTAFLK"/>
<dbReference type="OrthoDB" id="9411774at2759"/>
<dbReference type="PAN-GO" id="Q96JF6">
    <property type="GO annotations" value="4 GO annotations based on evolutionary models"/>
</dbReference>
<dbReference type="PhylomeDB" id="Q96JF6"/>
<dbReference type="TreeFam" id="TF343410"/>
<dbReference type="PathwayCommons" id="Q96JF6"/>
<dbReference type="SignaLink" id="Q96JF6"/>
<dbReference type="BioGRID-ORCS" id="84622">
    <property type="hits" value="8 hits in 1169 CRISPR screens"/>
</dbReference>
<dbReference type="ChiTaRS" id="ZNF594">
    <property type="organism name" value="human"/>
</dbReference>
<dbReference type="GenomeRNAi" id="84622"/>
<dbReference type="Pharos" id="Q96JF6">
    <property type="development level" value="Tdark"/>
</dbReference>
<dbReference type="PRO" id="PR:Q96JF6"/>
<dbReference type="Proteomes" id="UP000005640">
    <property type="component" value="Chromosome 17"/>
</dbReference>
<dbReference type="RNAct" id="Q96JF6">
    <property type="molecule type" value="protein"/>
</dbReference>
<dbReference type="Bgee" id="ENSG00000180626">
    <property type="expression patterns" value="Expressed in cortical plate and 122 other cell types or tissues"/>
</dbReference>
<dbReference type="ExpressionAtlas" id="Q96JF6">
    <property type="expression patterns" value="baseline and differential"/>
</dbReference>
<dbReference type="GO" id="GO:0005654">
    <property type="term" value="C:nucleoplasm"/>
    <property type="evidence" value="ECO:0000314"/>
    <property type="project" value="HPA"/>
</dbReference>
<dbReference type="GO" id="GO:0005634">
    <property type="term" value="C:nucleus"/>
    <property type="evidence" value="ECO:0000318"/>
    <property type="project" value="GO_Central"/>
</dbReference>
<dbReference type="GO" id="GO:0003677">
    <property type="term" value="F:DNA binding"/>
    <property type="evidence" value="ECO:0007669"/>
    <property type="project" value="UniProtKB-KW"/>
</dbReference>
<dbReference type="GO" id="GO:0008270">
    <property type="term" value="F:zinc ion binding"/>
    <property type="evidence" value="ECO:0007669"/>
    <property type="project" value="UniProtKB-KW"/>
</dbReference>
<dbReference type="GO" id="GO:0006357">
    <property type="term" value="P:regulation of transcription by RNA polymerase II"/>
    <property type="evidence" value="ECO:0000318"/>
    <property type="project" value="GO_Central"/>
</dbReference>
<dbReference type="FunFam" id="3.30.160.60:FF:003208">
    <property type="match status" value="1"/>
</dbReference>
<dbReference type="FunFam" id="3.30.160.60:FF:004878">
    <property type="match status" value="1"/>
</dbReference>
<dbReference type="FunFam" id="3.30.160.60:FF:000666">
    <property type="entry name" value="RB-associated KRAB zinc finger protein-like"/>
    <property type="match status" value="1"/>
</dbReference>
<dbReference type="FunFam" id="3.30.160.60:FF:003288">
    <property type="entry name" value="Uncharacterized protein"/>
    <property type="match status" value="1"/>
</dbReference>
<dbReference type="FunFam" id="3.30.160.60:FF:000001">
    <property type="entry name" value="Zinc finger protein 1 homolog"/>
    <property type="match status" value="1"/>
</dbReference>
<dbReference type="FunFam" id="3.30.160.60:FF:001494">
    <property type="entry name" value="zinc finger protein 10 isoform X2"/>
    <property type="match status" value="2"/>
</dbReference>
<dbReference type="FunFam" id="3.30.160.60:FF:000914">
    <property type="entry name" value="Zinc finger protein 16"/>
    <property type="match status" value="1"/>
</dbReference>
<dbReference type="FunFam" id="3.30.160.60:FF:001228">
    <property type="entry name" value="Zinc finger protein 236"/>
    <property type="match status" value="1"/>
</dbReference>
<dbReference type="FunFam" id="3.30.160.60:FF:001530">
    <property type="entry name" value="Zinc finger protein 268"/>
    <property type="match status" value="1"/>
</dbReference>
<dbReference type="FunFam" id="3.30.160.60:FF:000224">
    <property type="entry name" value="Zinc finger protein 329"/>
    <property type="match status" value="1"/>
</dbReference>
<dbReference type="FunFam" id="3.30.160.60:FF:002343">
    <property type="entry name" value="Zinc finger protein 33A"/>
    <property type="match status" value="1"/>
</dbReference>
<dbReference type="FunFam" id="3.30.160.60:FF:000212">
    <property type="entry name" value="zinc finger protein 382 isoform X2"/>
    <property type="match status" value="1"/>
</dbReference>
<dbReference type="FunFam" id="3.30.160.60:FF:001498">
    <property type="entry name" value="Zinc finger protein 404"/>
    <property type="match status" value="1"/>
</dbReference>
<dbReference type="FunFam" id="3.30.160.60:FF:002090">
    <property type="entry name" value="Zinc finger protein 473"/>
    <property type="match status" value="1"/>
</dbReference>
<dbReference type="FunFam" id="3.30.160.60:FF:000238">
    <property type="entry name" value="Zinc finger protein 485"/>
    <property type="match status" value="1"/>
</dbReference>
<dbReference type="FunFam" id="3.30.160.60:FF:002254">
    <property type="entry name" value="Zinc finger protein 540"/>
    <property type="match status" value="1"/>
</dbReference>
<dbReference type="FunFam" id="3.30.160.60:FF:000052">
    <property type="entry name" value="zinc finger protein 546 isoform X1"/>
    <property type="match status" value="1"/>
</dbReference>
<dbReference type="FunFam" id="3.30.160.60:FF:000737">
    <property type="entry name" value="Zinc finger protein 565"/>
    <property type="match status" value="1"/>
</dbReference>
<dbReference type="FunFam" id="3.30.160.60:FF:001437">
    <property type="entry name" value="Zinc finger protein 594"/>
    <property type="match status" value="2"/>
</dbReference>
<dbReference type="Gene3D" id="3.30.160.60">
    <property type="entry name" value="Classic Zinc Finger"/>
    <property type="match status" value="22"/>
</dbReference>
<dbReference type="InterPro" id="IPR036236">
    <property type="entry name" value="Znf_C2H2_sf"/>
</dbReference>
<dbReference type="InterPro" id="IPR013087">
    <property type="entry name" value="Znf_C2H2_type"/>
</dbReference>
<dbReference type="PANTHER" id="PTHR24376">
    <property type="entry name" value="ZINC FINGER PROTEIN"/>
    <property type="match status" value="1"/>
</dbReference>
<dbReference type="PANTHER" id="PTHR24376:SF244">
    <property type="entry name" value="ZINC FINGER PROTEIN 594"/>
    <property type="match status" value="1"/>
</dbReference>
<dbReference type="Pfam" id="PF00096">
    <property type="entry name" value="zf-C2H2"/>
    <property type="match status" value="17"/>
</dbReference>
<dbReference type="SMART" id="SM00355">
    <property type="entry name" value="ZnF_C2H2"/>
    <property type="match status" value="22"/>
</dbReference>
<dbReference type="SUPFAM" id="SSF57667">
    <property type="entry name" value="beta-beta-alpha zinc fingers"/>
    <property type="match status" value="13"/>
</dbReference>
<dbReference type="PROSITE" id="PS00028">
    <property type="entry name" value="ZINC_FINGER_C2H2_1"/>
    <property type="match status" value="20"/>
</dbReference>
<dbReference type="PROSITE" id="PS50157">
    <property type="entry name" value="ZINC_FINGER_C2H2_2"/>
    <property type="match status" value="22"/>
</dbReference>
<keyword id="KW-0238">DNA-binding</keyword>
<keyword id="KW-0479">Metal-binding</keyword>
<keyword id="KW-0539">Nucleus</keyword>
<keyword id="KW-1267">Proteomics identification</keyword>
<keyword id="KW-1185">Reference proteome</keyword>
<keyword id="KW-0677">Repeat</keyword>
<keyword id="KW-0804">Transcription</keyword>
<keyword id="KW-0805">Transcription regulation</keyword>
<keyword id="KW-0862">Zinc</keyword>
<keyword id="KW-0863">Zinc-finger</keyword>
<name>ZN594_HUMAN</name>
<feature type="chain" id="PRO_0000306878" description="Zinc finger protein 594">
    <location>
        <begin position="1"/>
        <end position="807"/>
    </location>
</feature>
<feature type="zinc finger region" description="C2H2-type 1" evidence="2">
    <location>
        <begin position="127"/>
        <end position="149"/>
    </location>
</feature>
<feature type="zinc finger region" description="C2H2-type 2" evidence="2">
    <location>
        <begin position="155"/>
        <end position="177"/>
    </location>
</feature>
<feature type="zinc finger region" description="C2H2-type 3" evidence="2">
    <location>
        <begin position="183"/>
        <end position="205"/>
    </location>
</feature>
<feature type="zinc finger region" description="C2H2-type 4" evidence="2">
    <location>
        <begin position="211"/>
        <end position="233"/>
    </location>
</feature>
<feature type="zinc finger region" description="C2H2-type 5" evidence="2">
    <location>
        <begin position="239"/>
        <end position="261"/>
    </location>
</feature>
<feature type="zinc finger region" description="C2H2-type 6" evidence="2">
    <location>
        <begin position="267"/>
        <end position="289"/>
    </location>
</feature>
<feature type="zinc finger region" description="C2H2-type 7" evidence="2">
    <location>
        <begin position="295"/>
        <end position="317"/>
    </location>
</feature>
<feature type="zinc finger region" description="C2H2-type 8" evidence="2">
    <location>
        <begin position="323"/>
        <end position="345"/>
    </location>
</feature>
<feature type="zinc finger region" description="C2H2-type 9; degenerate" evidence="2">
    <location>
        <begin position="348"/>
        <end position="370"/>
    </location>
</feature>
<feature type="zinc finger region" description="C2H2-type 10" evidence="2">
    <location>
        <begin position="376"/>
        <end position="398"/>
    </location>
</feature>
<feature type="zinc finger region" description="C2H2-type 11" evidence="2">
    <location>
        <begin position="404"/>
        <end position="426"/>
    </location>
</feature>
<feature type="zinc finger region" description="C2H2-type 12" evidence="2">
    <location>
        <begin position="432"/>
        <end position="454"/>
    </location>
</feature>
<feature type="zinc finger region" description="C2H2-type 13" evidence="2">
    <location>
        <begin position="460"/>
        <end position="482"/>
    </location>
</feature>
<feature type="zinc finger region" description="C2H2-type 14" evidence="2">
    <location>
        <begin position="488"/>
        <end position="510"/>
    </location>
</feature>
<feature type="zinc finger region" description="C2H2-type 15" evidence="2">
    <location>
        <begin position="516"/>
        <end position="538"/>
    </location>
</feature>
<feature type="zinc finger region" description="C2H2-type 16; degenerate" evidence="2">
    <location>
        <begin position="543"/>
        <end position="562"/>
    </location>
</feature>
<feature type="zinc finger region" description="C2H2-type 17" evidence="2">
    <location>
        <begin position="568"/>
        <end position="590"/>
    </location>
</feature>
<feature type="zinc finger region" description="C2H2-type 18" evidence="2">
    <location>
        <begin position="596"/>
        <end position="618"/>
    </location>
</feature>
<feature type="zinc finger region" description="C2H2-type 19" evidence="2">
    <location>
        <begin position="624"/>
        <end position="646"/>
    </location>
</feature>
<feature type="zinc finger region" description="C2H2-type 20" evidence="2">
    <location>
        <begin position="652"/>
        <end position="674"/>
    </location>
</feature>
<feature type="zinc finger region" description="C2H2-type 21" evidence="2">
    <location>
        <begin position="680"/>
        <end position="702"/>
    </location>
</feature>
<feature type="zinc finger region" description="C2H2-type 22" evidence="2">
    <location>
        <begin position="708"/>
        <end position="730"/>
    </location>
</feature>
<feature type="zinc finger region" description="C2H2-type 23; degenerate" evidence="2">
    <location>
        <begin position="733"/>
        <end position="755"/>
    </location>
</feature>
<feature type="zinc finger region" description="C2H2-type 24" evidence="2">
    <location>
        <begin position="761"/>
        <end position="783"/>
    </location>
</feature>
<feature type="region of interest" description="Disordered" evidence="3">
    <location>
        <begin position="1"/>
        <end position="23"/>
    </location>
</feature>
<feature type="sequence variant" id="VAR_061957" description="In dbSNP:rs59197486.">
    <original>Q</original>
    <variation>H</variation>
    <location>
        <position position="166"/>
    </location>
</feature>
<feature type="sequence variant" id="VAR_035333" description="In dbSNP:rs9908414.">
    <original>I</original>
    <variation>T</variation>
    <location>
        <position position="171"/>
    </location>
</feature>
<feature type="sequence variant" id="VAR_035334" description="In dbSNP:rs3853648.">
    <original>V</original>
    <variation>G</variation>
    <location>
        <position position="199"/>
    </location>
</feature>
<protein>
    <recommendedName>
        <fullName>Zinc finger protein 594</fullName>
    </recommendedName>
    <alternativeName>
        <fullName>Zinc finger protein HZF18</fullName>
    </alternativeName>
</protein>
<reference key="1">
    <citation type="journal article" date="2001" name="DNA Res.">
        <title>Prediction of the coding sequences of unidentified human genes. XX. The complete sequences of 100 new cDNA clones from brain which code for large proteins in vitro.</title>
        <authorList>
            <person name="Nagase T."/>
            <person name="Nakayama M."/>
            <person name="Nakajima D."/>
            <person name="Kikuno R."/>
            <person name="Ohara O."/>
        </authorList>
    </citation>
    <scope>NUCLEOTIDE SEQUENCE [LARGE SCALE MRNA]</scope>
    <source>
        <tissue>Brain</tissue>
    </source>
</reference>
<reference key="2">
    <citation type="journal article" date="2002" name="DNA Res.">
        <title>Construction of expression-ready cDNA clones for KIAA genes: manual curation of 330 KIAA cDNA clones.</title>
        <authorList>
            <person name="Nakajima D."/>
            <person name="Okazaki N."/>
            <person name="Yamakawa H."/>
            <person name="Kikuno R."/>
            <person name="Ohara O."/>
            <person name="Nagase T."/>
        </authorList>
    </citation>
    <scope>SEQUENCE REVISION</scope>
</reference>
<reference key="3">
    <citation type="journal article" date="1995" name="DNA Cell Biol.">
        <title>Isolation of cDNA clones for 42 different Kruppel-related zinc finger proteins expressed in the human monoblast cell line U-937.</title>
        <authorList>
            <person name="Abrink M."/>
            <person name="Aveskogh M."/>
            <person name="Hellman L."/>
        </authorList>
    </citation>
    <scope>NUCLEOTIDE SEQUENCE [MRNA] OF 775-807</scope>
</reference>
<evidence type="ECO:0000250" key="1"/>
<evidence type="ECO:0000255" key="2">
    <source>
        <dbReference type="PROSITE-ProRule" id="PRU00042"/>
    </source>
</evidence>
<evidence type="ECO:0000256" key="3">
    <source>
        <dbReference type="SAM" id="MobiDB-lite"/>
    </source>
</evidence>
<evidence type="ECO:0000305" key="4"/>
<sequence length="807" mass="93907">MKEWKSKMEISEEKKSARAASEKLQRQITQECELVETSNSEDRLLKHWVSPLKDAMRHLPSQESGIREMHIIPQKAIVGEIGHGCNEGEKILSAGESSHRYEVSGQNFKQKSGLTEHQKIHNINKTYECKECEKTFNRSSNLIIHQRIHTGNKPYVCNECGKDSNQSSNLIIHQRIHTGKKPYICHECGKDFNQSSNLVRHKQIHSGGNPYECKECGKAFKGSSNLVLHQRIHSRGKPYLCNKCGKAFSQSTDLIIHHRIHTGEKPYECYDCGQMFSQSSHLVPHQRIHTGEKPLKCNECEKAFRQHSHLTEHQRLHSGEKPYECHRCGKTFSGRTAFLKHQRLHAGEKIEECEKTFSKDEELREEQRIHQEEKAYWCNQCGRNFQGTSDLIRHQVTHTGEKPYECKECGKTFNQSSDLLRHHRIHSGEKPCVCSKCGKSFRGSSDLIRHHRVHTGEKPYECSECGKAFSQRSHLVTHQKIHTGEKPYQCTECGKAFRRRSLLIQHRRIHSGEKPYECKECGKLFIWRTAFLKHQSLHTGEKLECEKTFSQDEELRGEQKIHQEAKAYWCNQCGRAFQGSSDLIRHQVTHTREKPYECKECGKTFNQSSDLLRHHRIHSGEKPYVCNKCGKSFRGSSDLIKHHRIHTGEKPYECSECGKAFSQRSHLATHQKIHTGEKPYQCSECGNAFRRRSLLIQHRRLHSGEKPYECKECGKLFMWHTAFLKHQRLHAGEKLEECEKTFSKDEELRKEQRTHQEKKVYWCNQCSRTFQGSSDLIRHQVTHTREKPYECKECGKTQSELRPSETS</sequence>
<organism>
    <name type="scientific">Homo sapiens</name>
    <name type="common">Human</name>
    <dbReference type="NCBI Taxonomy" id="9606"/>
    <lineage>
        <taxon>Eukaryota</taxon>
        <taxon>Metazoa</taxon>
        <taxon>Chordata</taxon>
        <taxon>Craniata</taxon>
        <taxon>Vertebrata</taxon>
        <taxon>Euteleostomi</taxon>
        <taxon>Mammalia</taxon>
        <taxon>Eutheria</taxon>
        <taxon>Euarchontoglires</taxon>
        <taxon>Primates</taxon>
        <taxon>Haplorrhini</taxon>
        <taxon>Catarrhini</taxon>
        <taxon>Hominidae</taxon>
        <taxon>Homo</taxon>
    </lineage>
</organism>
<gene>
    <name type="primary">ZNF594</name>
    <name type="synonym">KIAA1871</name>
</gene>
<accession>Q96JF6</accession>
<accession>Q6RFS0</accession>